<sequence length="166" mass="18903">MKFWLQGCAFVGCLLLTLPCCAARRRASGENLQQTRPIAAANLQWESYAEALEHSKQDHKPICLFFTGSDWCMWCIKMQDQILQSSEFKHFAGVHLHMVEVDFPQKNHQPEEQRQKNQELKAQYKVTGFPELVFIDAEGKQLARMGFEPGGGAAYVSKVKSALKLR</sequence>
<proteinExistence type="evidence at protein level"/>
<reference key="1">
    <citation type="journal article" date="1999" name="Nat. Genet.">
        <title>Comparative genomes of Chlamydia pneumoniae and C. trachomatis.</title>
        <authorList>
            <person name="Kalman S."/>
            <person name="Mitchell W.P."/>
            <person name="Marathe R."/>
            <person name="Lammel C.J."/>
            <person name="Fan J."/>
            <person name="Hyman R.W."/>
            <person name="Olinger L."/>
            <person name="Grimwood J."/>
            <person name="Davis R.W."/>
            <person name="Stephens R.S."/>
        </authorList>
    </citation>
    <scope>NUCLEOTIDE SEQUENCE [LARGE SCALE GENOMIC DNA]</scope>
    <source>
        <strain>CWL029</strain>
    </source>
</reference>
<reference key="2">
    <citation type="journal article" date="2000" name="Nucleic Acids Res.">
        <title>Genome sequences of Chlamydia trachomatis MoPn and Chlamydia pneumoniae AR39.</title>
        <authorList>
            <person name="Read T.D."/>
            <person name="Brunham R.C."/>
            <person name="Shen C."/>
            <person name="Gill S.R."/>
            <person name="Heidelberg J.F."/>
            <person name="White O."/>
            <person name="Hickey E.K."/>
            <person name="Peterson J.D."/>
            <person name="Utterback T.R."/>
            <person name="Berry K.J."/>
            <person name="Bass S."/>
            <person name="Linher K.D."/>
            <person name="Weidman J.F."/>
            <person name="Khouri H.M."/>
            <person name="Craven B."/>
            <person name="Bowman C."/>
            <person name="Dodson R.J."/>
            <person name="Gwinn M.L."/>
            <person name="Nelson W.C."/>
            <person name="DeBoy R.T."/>
            <person name="Kolonay J.F."/>
            <person name="McClarty G."/>
            <person name="Salzberg S.L."/>
            <person name="Eisen J.A."/>
            <person name="Fraser C.M."/>
        </authorList>
    </citation>
    <scope>NUCLEOTIDE SEQUENCE [LARGE SCALE GENOMIC DNA]</scope>
    <source>
        <strain>AR39</strain>
    </source>
</reference>
<reference key="3">
    <citation type="journal article" date="2000" name="Nucleic Acids Res.">
        <title>Comparison of whole genome sequences of Chlamydia pneumoniae J138 from Japan and CWL029 from USA.</title>
        <authorList>
            <person name="Shirai M."/>
            <person name="Hirakawa H."/>
            <person name="Kimoto M."/>
            <person name="Tabuchi M."/>
            <person name="Kishi F."/>
            <person name="Ouchi K."/>
            <person name="Shiba T."/>
            <person name="Ishii K."/>
            <person name="Hattori M."/>
            <person name="Kuhara S."/>
            <person name="Nakazawa T."/>
        </authorList>
    </citation>
    <scope>NUCLEOTIDE SEQUENCE [LARGE SCALE GENOMIC DNA]</scope>
    <source>
        <strain>J138</strain>
    </source>
</reference>
<reference key="4">
    <citation type="submission" date="2002-05" db="EMBL/GenBank/DDBJ databases">
        <title>The genome sequence of Chlamydia pneumoniae TW183 and comparison with other Chlamydia strains based on whole genome sequence analysis.</title>
        <authorList>
            <person name="Geng M.M."/>
            <person name="Schuhmacher A."/>
            <person name="Muehldorfer I."/>
            <person name="Bensch K.W."/>
            <person name="Schaefer K.P."/>
            <person name="Schneider S."/>
            <person name="Pohl T."/>
            <person name="Essig A."/>
            <person name="Marre R."/>
            <person name="Melchers K."/>
        </authorList>
    </citation>
    <scope>NUCLEOTIDE SEQUENCE [LARGE SCALE GENOMIC DNA]</scope>
    <source>
        <strain>TW-183</strain>
    </source>
</reference>
<reference key="5">
    <citation type="journal article" date="2008" name="J. Biol. Chem.">
        <title>Insight into disulfide bond catalysis in Chlamydia from the structure and function of DsbH, a novel oxidoreductase.</title>
        <authorList>
            <person name="Mac T.T."/>
            <person name="von Hacht A."/>
            <person name="Hung K.C."/>
            <person name="Dutton R.J."/>
            <person name="Boyd D."/>
            <person name="Bardwell J.C."/>
            <person name="Ulmer T.S."/>
        </authorList>
    </citation>
    <scope>STRUCTURE BY NMR OF 23-166 OF MUTANT GLY-63</scope>
    <scope>FUNCTION</scope>
    <scope>REDOX POTENTIAL</scope>
    <scope>GENE NAME</scope>
    <scope>SUBUNIT</scope>
    <scope>SUBCELLULAR LOCATION</scope>
    <source>
        <strain>TW-183</strain>
    </source>
</reference>
<organism>
    <name type="scientific">Chlamydia pneumoniae</name>
    <name type="common">Chlamydophila pneumoniae</name>
    <dbReference type="NCBI Taxonomy" id="83558"/>
    <lineage>
        <taxon>Bacteria</taxon>
        <taxon>Pseudomonadati</taxon>
        <taxon>Chlamydiota</taxon>
        <taxon>Chlamydiia</taxon>
        <taxon>Chlamydiales</taxon>
        <taxon>Chlamydiaceae</taxon>
        <taxon>Chlamydia/Chlamydophila group</taxon>
        <taxon>Chlamydia</taxon>
    </lineage>
</organism>
<dbReference type="EC" id="1.8.-.-"/>
<dbReference type="EMBL" id="AE001363">
    <property type="protein sequence ID" value="AAD19064.1"/>
    <property type="molecule type" value="Genomic_DNA"/>
</dbReference>
<dbReference type="EMBL" id="AE002161">
    <property type="protein sequence ID" value="AAF38723.1"/>
    <property type="molecule type" value="Genomic_DNA"/>
</dbReference>
<dbReference type="EMBL" id="BA000008">
    <property type="protein sequence ID" value="BAA99134.1"/>
    <property type="molecule type" value="Genomic_DNA"/>
</dbReference>
<dbReference type="EMBL" id="AE009440">
    <property type="protein sequence ID" value="AAP98887.1"/>
    <property type="molecule type" value="Genomic_DNA"/>
</dbReference>
<dbReference type="PIR" id="D86606">
    <property type="entry name" value="D86606"/>
</dbReference>
<dbReference type="PIR" id="E72018">
    <property type="entry name" value="E72018"/>
</dbReference>
<dbReference type="RefSeq" id="NP_225121.1">
    <property type="nucleotide sequence ID" value="NC_000922.1"/>
</dbReference>
<dbReference type="RefSeq" id="WP_010883561.1">
    <property type="nucleotide sequence ID" value="NZ_LN847257.1"/>
</dbReference>
<dbReference type="PDB" id="2JU5">
    <property type="method" value="NMR"/>
    <property type="chains" value="A=23-166"/>
</dbReference>
<dbReference type="PDBsum" id="2JU5"/>
<dbReference type="BMRB" id="Q9Z6Y0"/>
<dbReference type="SMR" id="Q9Z6Y0"/>
<dbReference type="STRING" id="406984.CPK_ORF00336"/>
<dbReference type="GeneID" id="45050982"/>
<dbReference type="KEGG" id="cpa:CP_0940"/>
<dbReference type="KEGG" id="cpj:CPj0926"/>
<dbReference type="KEGG" id="cpn:CPn_0926"/>
<dbReference type="KEGG" id="cpt:CpB0958"/>
<dbReference type="PATRIC" id="fig|115713.3.peg.1007"/>
<dbReference type="eggNOG" id="COG0526">
    <property type="taxonomic scope" value="Bacteria"/>
</dbReference>
<dbReference type="HOGENOM" id="CLU_090389_8_1_0"/>
<dbReference type="OMA" id="GWCIRLQ"/>
<dbReference type="OrthoDB" id="9811036at2"/>
<dbReference type="EvolutionaryTrace" id="Q9Z6Y0"/>
<dbReference type="Proteomes" id="UP000000583">
    <property type="component" value="Chromosome"/>
</dbReference>
<dbReference type="Proteomes" id="UP000000801">
    <property type="component" value="Chromosome"/>
</dbReference>
<dbReference type="GO" id="GO:0042597">
    <property type="term" value="C:periplasmic space"/>
    <property type="evidence" value="ECO:0007669"/>
    <property type="project" value="UniProtKB-SubCell"/>
</dbReference>
<dbReference type="GO" id="GO:0016491">
    <property type="term" value="F:oxidoreductase activity"/>
    <property type="evidence" value="ECO:0007669"/>
    <property type="project" value="UniProtKB-KW"/>
</dbReference>
<dbReference type="Gene3D" id="3.40.30.10">
    <property type="entry name" value="Glutaredoxin"/>
    <property type="match status" value="1"/>
</dbReference>
<dbReference type="InterPro" id="IPR051099">
    <property type="entry name" value="AGR/TXD"/>
</dbReference>
<dbReference type="InterPro" id="IPR050047">
    <property type="entry name" value="DsbH"/>
</dbReference>
<dbReference type="InterPro" id="IPR012336">
    <property type="entry name" value="Thioredoxin-like_fold"/>
</dbReference>
<dbReference type="InterPro" id="IPR036249">
    <property type="entry name" value="Thioredoxin-like_sf"/>
</dbReference>
<dbReference type="InterPro" id="IPR013766">
    <property type="entry name" value="Thioredoxin_domain"/>
</dbReference>
<dbReference type="NCBIfam" id="NF043050">
    <property type="entry name" value="DisulfRedDsbH"/>
    <property type="match status" value="1"/>
</dbReference>
<dbReference type="PANTHER" id="PTHR15337">
    <property type="entry name" value="ANTERIOR GRADIENT PROTEIN-RELATED"/>
    <property type="match status" value="1"/>
</dbReference>
<dbReference type="PANTHER" id="PTHR15337:SF11">
    <property type="entry name" value="THIOREDOXIN DOMAIN-CONTAINING PROTEIN"/>
    <property type="match status" value="1"/>
</dbReference>
<dbReference type="Pfam" id="PF13098">
    <property type="entry name" value="Thioredoxin_2"/>
    <property type="match status" value="1"/>
</dbReference>
<dbReference type="SUPFAM" id="SSF52833">
    <property type="entry name" value="Thioredoxin-like"/>
    <property type="match status" value="1"/>
</dbReference>
<dbReference type="PROSITE" id="PS51352">
    <property type="entry name" value="THIOREDOXIN_2"/>
    <property type="match status" value="1"/>
</dbReference>
<gene>
    <name type="primary">dsbH</name>
    <name type="ordered locus">CPn_0926</name>
    <name type="ordered locus">CP_0940</name>
    <name type="ordered locus">CPj0926</name>
    <name type="ordered locus">CpB0958</name>
</gene>
<accession>Q9Z6Y0</accession>
<accession>Q7AI22</accession>
<accession>Q7BWR2</accession>
<accession>Q7DE35</accession>
<protein>
    <recommendedName>
        <fullName>Disulfide bond reductase DsbH</fullName>
        <shortName>Disulfide reductase</shortName>
        <ecNumber>1.8.-.-</ecNumber>
    </recommendedName>
    <alternativeName>
        <fullName>Protein-disulfide reductase</fullName>
    </alternativeName>
</protein>
<keyword id="KW-0002">3D-structure</keyword>
<keyword id="KW-1015">Disulfide bond</keyword>
<keyword id="KW-0560">Oxidoreductase</keyword>
<keyword id="KW-0574">Periplasm</keyword>
<keyword id="KW-0676">Redox-active center</keyword>
<keyword id="KW-0732">Signal</keyword>
<comment type="function">
    <text evidence="3">Catalyzes the reduction of disulfide bonds. May function in reducing intermolecular disulfides between proteins and small molecules in the periplasm, or keeping a specific subset of periplasmic proteins reduced, or maintaining the periplasm of Chlamydia in a generally reducing state. Seems to be unable to oxidize thiols into disulfides and does not display disulfide bond isomerase activity.</text>
</comment>
<comment type="biophysicochemical properties">
    <redoxPotential>
        <text>E(0) is -269.7 mV.</text>
    </redoxPotential>
</comment>
<comment type="subunit">
    <text evidence="3">Monomer.</text>
</comment>
<comment type="subcellular location">
    <subcellularLocation>
        <location evidence="3">Periplasm</location>
    </subcellularLocation>
</comment>
<evidence type="ECO:0000255" key="1"/>
<evidence type="ECO:0000255" key="2">
    <source>
        <dbReference type="PROSITE-ProRule" id="PRU00691"/>
    </source>
</evidence>
<evidence type="ECO:0000269" key="3">
    <source>
    </source>
</evidence>
<evidence type="ECO:0000305" key="4"/>
<evidence type="ECO:0007829" key="5">
    <source>
        <dbReference type="PDB" id="2JU5"/>
    </source>
</evidence>
<name>DSBH_CHLPN</name>
<feature type="signal peptide" evidence="1">
    <location>
        <begin position="1"/>
        <end position="22"/>
    </location>
</feature>
<feature type="chain" id="PRO_0000415894" description="Disulfide bond reductase DsbH">
    <location>
        <begin position="23"/>
        <end position="166"/>
    </location>
</feature>
<feature type="domain" description="Thioredoxin" evidence="2">
    <location>
        <begin position="32"/>
        <end position="166"/>
    </location>
</feature>
<feature type="binding site" evidence="1">
    <location>
        <begin position="73"/>
        <end position="74"/>
    </location>
    <ligand>
        <name>substrate</name>
    </ligand>
</feature>
<feature type="disulfide bond" description="Redox-active" evidence="4">
    <location>
        <begin position="72"/>
        <end position="75"/>
    </location>
</feature>
<feature type="helix" evidence="5">
    <location>
        <begin position="24"/>
        <end position="27"/>
    </location>
</feature>
<feature type="helix" evidence="5">
    <location>
        <begin position="48"/>
        <end position="58"/>
    </location>
</feature>
<feature type="strand" evidence="5">
    <location>
        <begin position="62"/>
        <end position="67"/>
    </location>
</feature>
<feature type="turn" evidence="5">
    <location>
        <begin position="69"/>
        <end position="71"/>
    </location>
</feature>
<feature type="helix" evidence="5">
    <location>
        <begin position="73"/>
        <end position="81"/>
    </location>
</feature>
<feature type="turn" evidence="5">
    <location>
        <begin position="82"/>
        <end position="84"/>
    </location>
</feature>
<feature type="helix" evidence="5">
    <location>
        <begin position="86"/>
        <end position="95"/>
    </location>
</feature>
<feature type="strand" evidence="5">
    <location>
        <begin position="97"/>
        <end position="102"/>
    </location>
</feature>
<feature type="helix" evidence="5">
    <location>
        <begin position="111"/>
        <end position="123"/>
    </location>
</feature>
<feature type="strand" evidence="5">
    <location>
        <begin position="128"/>
        <end position="135"/>
    </location>
</feature>
<feature type="strand" evidence="5">
    <location>
        <begin position="141"/>
        <end position="145"/>
    </location>
</feature>
<feature type="helix" evidence="5">
    <location>
        <begin position="152"/>
        <end position="163"/>
    </location>
</feature>